<reference key="1">
    <citation type="journal article" date="2011" name="Nature">
        <title>A high-resolution map of human evolutionary constraint using 29 mammals.</title>
        <authorList>
            <person name="Lindblad-Toh K."/>
            <person name="Garber M."/>
            <person name="Zuk O."/>
            <person name="Lin M.F."/>
            <person name="Parker B.J."/>
            <person name="Washietl S."/>
            <person name="Kheradpour P."/>
            <person name="Ernst J."/>
            <person name="Jordan G."/>
            <person name="Mauceli E."/>
            <person name="Ward L.D."/>
            <person name="Lowe C.B."/>
            <person name="Holloway A.K."/>
            <person name="Clamp M."/>
            <person name="Gnerre S."/>
            <person name="Alfoldi J."/>
            <person name="Beal K."/>
            <person name="Chang J."/>
            <person name="Clawson H."/>
            <person name="Cuff J."/>
            <person name="Di Palma F."/>
            <person name="Fitzgerald S."/>
            <person name="Flicek P."/>
            <person name="Guttman M."/>
            <person name="Hubisz M.J."/>
            <person name="Jaffe D.B."/>
            <person name="Jungreis I."/>
            <person name="Kent W.J."/>
            <person name="Kostka D."/>
            <person name="Lara M."/>
            <person name="Martins A.L."/>
            <person name="Massingham T."/>
            <person name="Moltke I."/>
            <person name="Raney B.J."/>
            <person name="Rasmussen M.D."/>
            <person name="Robinson J."/>
            <person name="Stark A."/>
            <person name="Vilella A.J."/>
            <person name="Wen J."/>
            <person name="Xie X."/>
            <person name="Zody M.C."/>
            <person name="Baldwin J."/>
            <person name="Bloom T."/>
            <person name="Chin C.W."/>
            <person name="Heiman D."/>
            <person name="Nicol R."/>
            <person name="Nusbaum C."/>
            <person name="Young S."/>
            <person name="Wilkinson J."/>
            <person name="Worley K.C."/>
            <person name="Kovar C.L."/>
            <person name="Muzny D.M."/>
            <person name="Gibbs R.A."/>
            <person name="Cree A."/>
            <person name="Dihn H.H."/>
            <person name="Fowler G."/>
            <person name="Jhangiani S."/>
            <person name="Joshi V."/>
            <person name="Lee S."/>
            <person name="Lewis L.R."/>
            <person name="Nazareth L.V."/>
            <person name="Okwuonu G."/>
            <person name="Santibanez J."/>
            <person name="Warren W.C."/>
            <person name="Mardis E.R."/>
            <person name="Weinstock G.M."/>
            <person name="Wilson R.K."/>
            <person name="Delehaunty K."/>
            <person name="Dooling D."/>
            <person name="Fronik C."/>
            <person name="Fulton L."/>
            <person name="Fulton B."/>
            <person name="Graves T."/>
            <person name="Minx P."/>
            <person name="Sodergren E."/>
            <person name="Birney E."/>
            <person name="Margulies E.H."/>
            <person name="Herrero J."/>
            <person name="Green E.D."/>
            <person name="Haussler D."/>
            <person name="Siepel A."/>
            <person name="Goldman N."/>
            <person name="Pollard K.S."/>
            <person name="Pedersen J.S."/>
            <person name="Lander E.S."/>
            <person name="Kellis M."/>
        </authorList>
    </citation>
    <scope>NUCLEOTIDE SEQUENCE [LARGE SCALE GENOMIC DNA]</scope>
    <source>
        <strain>Thorbecke</strain>
    </source>
</reference>
<reference evidence="13 14" key="2">
    <citation type="journal article" date="2015" name="Nature">
        <title>Structural basis for stop codon recognition in eukaryotes.</title>
        <authorList>
            <person name="Brown A."/>
            <person name="Shao S."/>
            <person name="Murray J."/>
            <person name="Hegde R.S."/>
            <person name="Ramakrishnan V."/>
        </authorList>
    </citation>
    <scope>STRUCTURE BY ELECTRON MICROSCOPY (3.45 ANGSTROMS) OF 38-156 OF RIBOSOME</scope>
    <scope>FUNCTION</scope>
    <scope>SUBCELLULAR LOCATION</scope>
    <scope>SUBUNIT</scope>
</reference>
<reference evidence="15 16" key="3">
    <citation type="journal article" date="2018" name="Elife">
        <title>Dual tRNA mimicry in the Cricket paralysis virus IRES uncovers an unexpected similarity with the Hepatitis C Virus IRES.</title>
        <authorList>
            <person name="Pisareva V.P."/>
            <person name="Pisarev A.V."/>
            <person name="Fernandez I.S."/>
        </authorList>
    </citation>
    <scope>STRUCTURE BY ELECTRON MICROSCOPY (3.20 ANGSTROMS) OF RIBOSOME</scope>
    <scope>SUBCELLULAR LOCATION</scope>
    <scope>SUBUNIT</scope>
</reference>
<reference evidence="17 18" key="4">
    <citation type="journal article" date="2018" name="Mol. Cell">
        <title>ZNF598 is a quality control sensor of collided ribosomes.</title>
        <authorList>
            <person name="Juszkiewicz S."/>
            <person name="Chandrasekaran V."/>
            <person name="Lin Z."/>
            <person name="Kraatz S."/>
            <person name="Ramakrishnan V."/>
            <person name="Hegde R.S."/>
        </authorList>
    </citation>
    <scope>STRUCTURE BY ELECTRON MICROSCOPY (3.80 ANGSTROMS) OF RIBOSOME</scope>
    <scope>SUBCELLULAR LOCATION</scope>
    <scope>SUBUNIT</scope>
</reference>
<reference evidence="21 22" key="5">
    <citation type="journal article" date="2019" name="Elife">
        <title>Structural and mutational analysis of the ribosome-arresting human XBP1u.</title>
        <authorList>
            <person name="Shanmuganathan V."/>
            <person name="Schiller N."/>
            <person name="Magoulopoulou A."/>
            <person name="Cheng J."/>
            <person name="Braunger K."/>
            <person name="Cymer F."/>
            <person name="Berninghausen O."/>
            <person name="Beatrix B."/>
            <person name="Kohno K."/>
            <person name="von Heijne G."/>
            <person name="Beckmann R."/>
        </authorList>
    </citation>
    <scope>STRUCTURE BY ELECTRON MICROSCOPY (3.00 ANGSTROMS) OF 39-156 OF RIBOSOME</scope>
    <scope>SUBCELLULAR LOCATION</scope>
    <scope>SUBUNIT</scope>
</reference>
<reference evidence="19 20" key="6">
    <citation type="journal article" date="2019" name="EMBO J.">
        <title>The Israeli acute paralysis virus IRES captures host ribosomes by mimicking a ribosomal state with hybrid tRNAs.</title>
        <authorList>
            <person name="Acosta-Reyes F."/>
            <person name="Neupane R."/>
            <person name="Frank J."/>
            <person name="Fernandez I.S."/>
        </authorList>
    </citation>
    <scope>STRUCTURE BY ELECTRON MICROSCOPY (3.10 ANGSTROMS) OF RIBOSOME</scope>
    <scope>SUBCELLULAR LOCATION</scope>
    <scope>SUBUNIT</scope>
</reference>
<reference evidence="23" key="7">
    <citation type="journal article" date="2019" name="Nat. Struct. Mol. Biol.">
        <title>Mechanism of ribosome stalling during translation of a poly(A) tail.</title>
        <authorList>
            <person name="Chandrasekaran V."/>
            <person name="Juszkiewicz S."/>
            <person name="Choi J."/>
            <person name="Puglisi J.D."/>
            <person name="Brown A."/>
            <person name="Shao S."/>
            <person name="Ramakrishnan V."/>
            <person name="Hegde R.S."/>
        </authorList>
    </citation>
    <scope>STRUCTURE BY ELECTRON MICROSCOPY (2.80 ANGSTROMS) OF RIBOSOME</scope>
    <scope>SUBCELLULAR LOCATION</scope>
    <scope>SUBUNIT</scope>
</reference>
<reference evidence="24 25" key="8">
    <citation type="journal article" date="2020" name="Cell Rep.">
        <title>The Halastavi arva virus intergenic region IRES promotes translation by the simplest possible initiation mechanism.</title>
        <authorList>
            <person name="Abaeva I.S."/>
            <person name="Vicens Q."/>
            <person name="Bochler A."/>
            <person name="Soufari H."/>
            <person name="Simonetti A."/>
            <person name="Pestova T.V."/>
            <person name="Hashem Y."/>
            <person name="Hellen C.U.T."/>
        </authorList>
    </citation>
    <scope>STRUCTURE BY ELECTRON MICROSCOPY (3.49 ANGSTROMS) OF 38-156 OF RIBOSOME</scope>
    <scope>SUBCELLULAR LOCATION</scope>
    <scope>SUBUNIT</scope>
</reference>
<reference evidence="26 27" key="9">
    <citation type="journal article" date="2022" name="Science">
        <title>Structure of the mammalian ribosome as it decodes the selenocysteine UGA codon.</title>
        <authorList>
            <person name="Hilal T."/>
            <person name="Killam B.Y."/>
            <person name="Grozdanovic M."/>
            <person name="Dobosz-Bartoszek M."/>
            <person name="Loerke J."/>
            <person name="Buerger J."/>
            <person name="Mielke T."/>
            <person name="Copeland P.R."/>
            <person name="Simonovic M."/>
            <person name="Spahn C.M.T."/>
        </authorList>
    </citation>
    <scope>STRUCTURE BY ELECTRON MICROSCOPY (2.80 ANGSTROMS) OF RIBOSOME</scope>
    <scope>SUBCELLULAR LOCATION</scope>
    <scope>SUBUNIT</scope>
</reference>
<organism>
    <name type="scientific">Oryctolagus cuniculus</name>
    <name type="common">Rabbit</name>
    <dbReference type="NCBI Taxonomy" id="9986"/>
    <lineage>
        <taxon>Eukaryota</taxon>
        <taxon>Metazoa</taxon>
        <taxon>Chordata</taxon>
        <taxon>Craniata</taxon>
        <taxon>Vertebrata</taxon>
        <taxon>Euteleostomi</taxon>
        <taxon>Mammalia</taxon>
        <taxon>Eutheria</taxon>
        <taxon>Euarchontoglires</taxon>
        <taxon>Glires</taxon>
        <taxon>Lagomorpha</taxon>
        <taxon>Leporidae</taxon>
        <taxon>Oryctolagus</taxon>
    </lineage>
</organism>
<name>RL23A_RABIT</name>
<protein>
    <recommendedName>
        <fullName>Large ribosomal subunit protein uL23</fullName>
    </recommendedName>
    <alternativeName>
        <fullName>60S ribosomal protein L23a</fullName>
    </alternativeName>
</protein>
<evidence type="ECO:0000250" key="1">
    <source>
        <dbReference type="UniProtKB" id="P62750"/>
    </source>
</evidence>
<evidence type="ECO:0000250" key="2">
    <source>
        <dbReference type="UniProtKB" id="P62751"/>
    </source>
</evidence>
<evidence type="ECO:0000256" key="3">
    <source>
        <dbReference type="SAM" id="MobiDB-lite"/>
    </source>
</evidence>
<evidence type="ECO:0000269" key="4">
    <source>
    </source>
</evidence>
<evidence type="ECO:0000269" key="5">
    <source>
    </source>
</evidence>
<evidence type="ECO:0000269" key="6">
    <source>
    </source>
</evidence>
<evidence type="ECO:0000269" key="7">
    <source>
    </source>
</evidence>
<evidence type="ECO:0000269" key="8">
    <source>
    </source>
</evidence>
<evidence type="ECO:0000269" key="9">
    <source>
    </source>
</evidence>
<evidence type="ECO:0000269" key="10">
    <source>
    </source>
</evidence>
<evidence type="ECO:0000269" key="11">
    <source>
    </source>
</evidence>
<evidence type="ECO:0000305" key="12"/>
<evidence type="ECO:0007744" key="13">
    <source>
        <dbReference type="PDB" id="3JAG"/>
    </source>
</evidence>
<evidence type="ECO:0007744" key="14">
    <source>
        <dbReference type="PDB" id="3JAH"/>
    </source>
</evidence>
<evidence type="ECO:0007744" key="15">
    <source>
        <dbReference type="PDB" id="6D90"/>
    </source>
</evidence>
<evidence type="ECO:0007744" key="16">
    <source>
        <dbReference type="PDB" id="6D9J"/>
    </source>
</evidence>
<evidence type="ECO:0007744" key="17">
    <source>
        <dbReference type="PDB" id="6HCF"/>
    </source>
</evidence>
<evidence type="ECO:0007744" key="18">
    <source>
        <dbReference type="PDB" id="6HCJ"/>
    </source>
</evidence>
<evidence type="ECO:0007744" key="19">
    <source>
        <dbReference type="PDB" id="6P5I"/>
    </source>
</evidence>
<evidence type="ECO:0007744" key="20">
    <source>
        <dbReference type="PDB" id="6P5J"/>
    </source>
</evidence>
<evidence type="ECO:0007744" key="21">
    <source>
        <dbReference type="PDB" id="6R5Q"/>
    </source>
</evidence>
<evidence type="ECO:0007744" key="22">
    <source>
        <dbReference type="PDB" id="6R6G"/>
    </source>
</evidence>
<evidence type="ECO:0007744" key="23">
    <source>
        <dbReference type="PDB" id="6SGC"/>
    </source>
</evidence>
<evidence type="ECO:0007744" key="24">
    <source>
        <dbReference type="PDB" id="6ZVK"/>
    </source>
</evidence>
<evidence type="ECO:0007744" key="25">
    <source>
        <dbReference type="PDB" id="7A01"/>
    </source>
</evidence>
<evidence type="ECO:0007744" key="26">
    <source>
        <dbReference type="PDB" id="7ZJW"/>
    </source>
</evidence>
<evidence type="ECO:0007744" key="27">
    <source>
        <dbReference type="PDB" id="7ZJX"/>
    </source>
</evidence>
<comment type="function">
    <text evidence="1 4">Component of the large ribosomal subunit (PubMed:26245381). The ribosome is a large ribonucleoprotein complex responsible for the synthesis of proteins in the cell (PubMed:26245381). Binds a specific region on the 26S rRNA (By similarity). May promote p53/TP53 degradation possibly through the stimulation of MDM2-mediated TP53 polyubiquitination (By similarity).</text>
</comment>
<comment type="subunit">
    <text evidence="1 4 5 6 7 8 9 10 11">Component of the large ribosomal subunit (PubMed:26245381, PubMed:29856316, PubMed:30293783, PubMed:31246176, PubMed:31609474, PubMed:31768042, PubMed:33296660, PubMed:35709277). Interacts with LYAR and GNL2 (By similarity). Interacts with MDM2; this interaction may promote MDM2-mediated p53/TP53 polyubiquitination (By similarity). Directly interacts (via BIB domain) with IPO5, IPO7, KPNB1 and TNPO1; these interactions are involved in RPL23A nuclear import for the assembly of ribosomal subunits (By similarity). Interacts with IPO8 (By similarity).</text>
</comment>
<comment type="subcellular location">
    <subcellularLocation>
        <location evidence="4 5 6 7 8 9 10 11">Cytoplasm</location>
    </subcellularLocation>
    <subcellularLocation>
        <location evidence="1">Nucleus</location>
    </subcellularLocation>
    <text evidence="1">Although RPL23A is functional within the cytoplasm, the assembly of ribosomal subunits occurs in the nucleus. RPL23A nuclear import is mediated by IPO5/RanBP5, IPO7/RanBP7, KPNB1/importin-beta or TPNO1/Trn.</text>
</comment>
<comment type="domain">
    <text evidence="1">The N-terminal beta-like import receptor binding (BIB) domain mediates interaction with IPO5, IPO7, KPNB1 and TNPO1.</text>
</comment>
<comment type="PTM">
    <text evidence="2">N-terminus is methylated by METTL11A/NTM1.</text>
</comment>
<comment type="PTM">
    <text evidence="2">Citrullinated by PADI4.</text>
</comment>
<comment type="similarity">
    <text evidence="12">Belongs to the universal ribosomal protein uL23 family.</text>
</comment>
<accession>G1SE76</accession>
<sequence length="156" mass="17723">MAPKAKKEAPAPPKVEAKAKALKAKKAVLKGVHSHKKKKIRTSPTFRRPKTLRLRRQPKYPRKSAPRRNKLDHYAIIKFPLTTESAMKKIEDNNTLVFIVDVKANKHQIKQAVKKLYDIDVAKVNTLIRPDGEKKAYVRLAPDYDALDVANKIGII</sequence>
<feature type="initiator methionine" description="Removed" evidence="2">
    <location>
        <position position="1"/>
    </location>
</feature>
<feature type="chain" id="PRO_0000460111" description="Large ribosomal subunit protein uL23">
    <location>
        <begin position="2"/>
        <end position="156"/>
    </location>
</feature>
<feature type="region of interest" description="Disordered" evidence="3">
    <location>
        <begin position="1"/>
        <end position="67"/>
    </location>
</feature>
<feature type="region of interest" description="Beta-like import receptor binding (BIB) domain" evidence="1">
    <location>
        <begin position="32"/>
        <end position="74"/>
    </location>
</feature>
<feature type="compositionally biased region" description="Basic and acidic residues" evidence="3">
    <location>
        <begin position="1"/>
        <end position="19"/>
    </location>
</feature>
<feature type="compositionally biased region" description="Basic residues" evidence="3">
    <location>
        <begin position="20"/>
        <end position="67"/>
    </location>
</feature>
<feature type="modified residue" description="N,N,N-trimethylalanine" evidence="2">
    <location>
        <position position="2"/>
    </location>
</feature>
<feature type="modified residue" description="Citrulline" evidence="2">
    <location>
        <position position="41"/>
    </location>
</feature>
<feature type="modified residue" description="Phosphoserine" evidence="1">
    <location>
        <position position="43"/>
    </location>
</feature>
<feature type="modified residue" description="Phosphothreonine" evidence="1">
    <location>
        <position position="45"/>
    </location>
</feature>
<feature type="modified residue" description="N6-acetyllysine" evidence="2">
    <location>
        <position position="70"/>
    </location>
</feature>
<feature type="cross-link" description="Glycyl lysine isopeptide (Lys-Gly) (interchain with G-Cter in SUMO2)" evidence="1">
    <location>
        <position position="14"/>
    </location>
</feature>
<keyword id="KW-0002">3D-structure</keyword>
<keyword id="KW-0007">Acetylation</keyword>
<keyword id="KW-0164">Citrullination</keyword>
<keyword id="KW-0963">Cytoplasm</keyword>
<keyword id="KW-1017">Isopeptide bond</keyword>
<keyword id="KW-0488">Methylation</keyword>
<keyword id="KW-0539">Nucleus</keyword>
<keyword id="KW-0597">Phosphoprotein</keyword>
<keyword id="KW-1185">Reference proteome</keyword>
<keyword id="KW-0687">Ribonucleoprotein</keyword>
<keyword id="KW-0689">Ribosomal protein</keyword>
<keyword id="KW-0694">RNA-binding</keyword>
<keyword id="KW-0699">rRNA-binding</keyword>
<keyword id="KW-0832">Ubl conjugation</keyword>
<gene>
    <name type="primary">RPL23A</name>
</gene>
<dbReference type="EMBL" id="AAGW02006925">
    <property type="status" value="NOT_ANNOTATED_CDS"/>
    <property type="molecule type" value="Genomic_DNA"/>
</dbReference>
<dbReference type="EMBL" id="AAGW02031421">
    <property type="status" value="NOT_ANNOTATED_CDS"/>
    <property type="molecule type" value="Genomic_DNA"/>
</dbReference>
<dbReference type="EMBL" id="AAGW02034897">
    <property type="status" value="NOT_ANNOTATED_CDS"/>
    <property type="molecule type" value="Genomic_DNA"/>
</dbReference>
<dbReference type="EMBL" id="AAGW02049846">
    <property type="status" value="NOT_ANNOTATED_CDS"/>
    <property type="molecule type" value="Genomic_DNA"/>
</dbReference>
<dbReference type="RefSeq" id="NP_001192153.1">
    <property type="nucleotide sequence ID" value="NM_001205224.1"/>
</dbReference>
<dbReference type="RefSeq" id="XP_002709804.1">
    <property type="nucleotide sequence ID" value="XM_002709758.3"/>
</dbReference>
<dbReference type="RefSeq" id="XP_002720819.1">
    <property type="nucleotide sequence ID" value="XM_002720773.2"/>
</dbReference>
<dbReference type="RefSeq" id="XP_017197669.1">
    <property type="nucleotide sequence ID" value="XM_017342180.1"/>
</dbReference>
<dbReference type="RefSeq" id="XP_017199778.1">
    <property type="nucleotide sequence ID" value="XM_017344289.1"/>
</dbReference>
<dbReference type="RefSeq" id="XP_069916063.1">
    <property type="nucleotide sequence ID" value="XM_070059962.1"/>
</dbReference>
<dbReference type="PDB" id="3JAG">
    <property type="method" value="EM"/>
    <property type="resolution" value="3.65 A"/>
    <property type="chains" value="X=38-156"/>
</dbReference>
<dbReference type="PDB" id="3JAH">
    <property type="method" value="EM"/>
    <property type="resolution" value="3.45 A"/>
    <property type="chains" value="X=38-156"/>
</dbReference>
<dbReference type="PDB" id="3JAI">
    <property type="method" value="EM"/>
    <property type="resolution" value="3.65 A"/>
    <property type="chains" value="X=38-156"/>
</dbReference>
<dbReference type="PDB" id="5LZS">
    <property type="method" value="EM"/>
    <property type="resolution" value="3.31 A"/>
    <property type="chains" value="X=1-156"/>
</dbReference>
<dbReference type="PDB" id="5LZT">
    <property type="method" value="EM"/>
    <property type="resolution" value="3.65 A"/>
    <property type="chains" value="X=1-156"/>
</dbReference>
<dbReference type="PDB" id="5LZU">
    <property type="method" value="EM"/>
    <property type="resolution" value="3.75 A"/>
    <property type="chains" value="X=1-156"/>
</dbReference>
<dbReference type="PDB" id="5LZV">
    <property type="method" value="EM"/>
    <property type="resolution" value="3.35 A"/>
    <property type="chains" value="X=1-156"/>
</dbReference>
<dbReference type="PDB" id="5LZW">
    <property type="method" value="EM"/>
    <property type="resolution" value="3.53 A"/>
    <property type="chains" value="X=1-156"/>
</dbReference>
<dbReference type="PDB" id="5LZX">
    <property type="method" value="EM"/>
    <property type="resolution" value="3.67 A"/>
    <property type="chains" value="X=1-156"/>
</dbReference>
<dbReference type="PDB" id="5LZY">
    <property type="method" value="EM"/>
    <property type="resolution" value="3.99 A"/>
    <property type="chains" value="X=1-156"/>
</dbReference>
<dbReference type="PDB" id="5LZZ">
    <property type="method" value="EM"/>
    <property type="resolution" value="3.47 A"/>
    <property type="chains" value="X=1-156"/>
</dbReference>
<dbReference type="PDB" id="6D90">
    <property type="method" value="EM"/>
    <property type="resolution" value="3.20 A"/>
    <property type="chains" value="X=1-156"/>
</dbReference>
<dbReference type="PDB" id="6D9J">
    <property type="method" value="EM"/>
    <property type="resolution" value="3.20 A"/>
    <property type="chains" value="X=1-156"/>
</dbReference>
<dbReference type="PDB" id="6FTG">
    <property type="method" value="EM"/>
    <property type="resolution" value="9.10 A"/>
    <property type="chains" value="X=38-156"/>
</dbReference>
<dbReference type="PDB" id="6FTI">
    <property type="method" value="EM"/>
    <property type="resolution" value="4.20 A"/>
    <property type="chains" value="X=38-156"/>
</dbReference>
<dbReference type="PDB" id="6FTJ">
    <property type="method" value="EM"/>
    <property type="resolution" value="4.70 A"/>
    <property type="chains" value="X=38-156"/>
</dbReference>
<dbReference type="PDB" id="6HCF">
    <property type="method" value="EM"/>
    <property type="resolution" value="3.90 A"/>
    <property type="chains" value="X3=1-156"/>
</dbReference>
<dbReference type="PDB" id="6HCJ">
    <property type="method" value="EM"/>
    <property type="resolution" value="3.80 A"/>
    <property type="chains" value="X3=1-156"/>
</dbReference>
<dbReference type="PDB" id="6HCM">
    <property type="method" value="EM"/>
    <property type="resolution" value="6.80 A"/>
    <property type="chains" value="X3=1-156"/>
</dbReference>
<dbReference type="PDB" id="6HCQ">
    <property type="method" value="EM"/>
    <property type="resolution" value="6.50 A"/>
    <property type="chains" value="X3=1-156"/>
</dbReference>
<dbReference type="PDB" id="6P5I">
    <property type="method" value="EM"/>
    <property type="resolution" value="3.10 A"/>
    <property type="chains" value="AX=1-156"/>
</dbReference>
<dbReference type="PDB" id="6P5J">
    <property type="method" value="EM"/>
    <property type="resolution" value="3.10 A"/>
    <property type="chains" value="AX=1-156"/>
</dbReference>
<dbReference type="PDB" id="6P5K">
    <property type="method" value="EM"/>
    <property type="resolution" value="3.10 A"/>
    <property type="chains" value="AX=1-156"/>
</dbReference>
<dbReference type="PDB" id="6P5N">
    <property type="method" value="EM"/>
    <property type="resolution" value="3.20 A"/>
    <property type="chains" value="AX=1-156"/>
</dbReference>
<dbReference type="PDB" id="6R5Q">
    <property type="method" value="EM"/>
    <property type="resolution" value="3.00 A"/>
    <property type="chains" value="X=39-156"/>
</dbReference>
<dbReference type="PDB" id="6R6G">
    <property type="method" value="EM"/>
    <property type="resolution" value="3.70 A"/>
    <property type="chains" value="X=39-156"/>
</dbReference>
<dbReference type="PDB" id="6R6P">
    <property type="method" value="EM"/>
    <property type="resolution" value="3.10 A"/>
    <property type="chains" value="X=38-156"/>
</dbReference>
<dbReference type="PDB" id="6R7Q">
    <property type="method" value="EM"/>
    <property type="resolution" value="3.90 A"/>
    <property type="chains" value="X=39-156"/>
</dbReference>
<dbReference type="PDB" id="6SGC">
    <property type="method" value="EM"/>
    <property type="resolution" value="2.80 A"/>
    <property type="chains" value="X2=1-156"/>
</dbReference>
<dbReference type="PDB" id="6T59">
    <property type="method" value="EM"/>
    <property type="resolution" value="3.11 A"/>
    <property type="chains" value="X3=1-156"/>
</dbReference>
<dbReference type="PDB" id="6ZVK">
    <property type="method" value="EM"/>
    <property type="resolution" value="3.49 A"/>
    <property type="chains" value="m2=38-156"/>
</dbReference>
<dbReference type="PDB" id="7A01">
    <property type="method" value="EM"/>
    <property type="resolution" value="3.60 A"/>
    <property type="chains" value="m2=38-156"/>
</dbReference>
<dbReference type="PDB" id="7MDZ">
    <property type="method" value="EM"/>
    <property type="resolution" value="3.20 A"/>
    <property type="chains" value="X=1-156"/>
</dbReference>
<dbReference type="PDB" id="7NFX">
    <property type="method" value="EM"/>
    <property type="resolution" value="3.20 A"/>
    <property type="chains" value="X=1-156"/>
</dbReference>
<dbReference type="PDB" id="7NWG">
    <property type="method" value="EM"/>
    <property type="resolution" value="3.80 A"/>
    <property type="chains" value="X3=1-156"/>
</dbReference>
<dbReference type="PDB" id="7NWH">
    <property type="method" value="EM"/>
    <property type="resolution" value="4.10 A"/>
    <property type="chains" value="X=1-156"/>
</dbReference>
<dbReference type="PDB" id="7NWI">
    <property type="method" value="EM"/>
    <property type="resolution" value="3.13 A"/>
    <property type="chains" value="X=1-156"/>
</dbReference>
<dbReference type="PDB" id="7O7Y">
    <property type="method" value="EM"/>
    <property type="resolution" value="2.20 A"/>
    <property type="chains" value="BX=1-156"/>
</dbReference>
<dbReference type="PDB" id="7O7Z">
    <property type="method" value="EM"/>
    <property type="resolution" value="2.40 A"/>
    <property type="chains" value="BX=1-156"/>
</dbReference>
<dbReference type="PDB" id="7O80">
    <property type="method" value="EM"/>
    <property type="resolution" value="2.90 A"/>
    <property type="chains" value="BX=1-156"/>
</dbReference>
<dbReference type="PDB" id="7O81">
    <property type="method" value="EM"/>
    <property type="resolution" value="3.10 A"/>
    <property type="chains" value="BX=1-156"/>
</dbReference>
<dbReference type="PDB" id="7OBR">
    <property type="method" value="EM"/>
    <property type="resolution" value="2.80 A"/>
    <property type="chains" value="X=1-156"/>
</dbReference>
<dbReference type="PDB" id="7QWQ">
    <property type="method" value="EM"/>
    <property type="resolution" value="2.83 A"/>
    <property type="chains" value="X=1-156"/>
</dbReference>
<dbReference type="PDB" id="7QWR">
    <property type="method" value="EM"/>
    <property type="resolution" value="2.90 A"/>
    <property type="chains" value="X=1-156"/>
</dbReference>
<dbReference type="PDB" id="7QWS">
    <property type="method" value="EM"/>
    <property type="resolution" value="3.40 A"/>
    <property type="chains" value="X=1-156"/>
</dbReference>
<dbReference type="PDB" id="7TM3">
    <property type="method" value="EM"/>
    <property type="resolution" value="3.25 A"/>
    <property type="chains" value="X=1-156"/>
</dbReference>
<dbReference type="PDB" id="7TUT">
    <property type="method" value="EM"/>
    <property type="resolution" value="3.88 A"/>
    <property type="chains" value="X=1-156"/>
</dbReference>
<dbReference type="PDB" id="7ZJW">
    <property type="method" value="EM"/>
    <property type="resolution" value="2.80 A"/>
    <property type="chains" value="La=1-156"/>
</dbReference>
<dbReference type="PDB" id="7ZJX">
    <property type="method" value="EM"/>
    <property type="resolution" value="3.10 A"/>
    <property type="chains" value="La=1-156"/>
</dbReference>
<dbReference type="PDB" id="8B5L">
    <property type="method" value="EM"/>
    <property type="resolution" value="2.86 A"/>
    <property type="chains" value="X=39-156"/>
</dbReference>
<dbReference type="PDB" id="8B6C">
    <property type="method" value="EM"/>
    <property type="resolution" value="2.79 A"/>
    <property type="chains" value="X=39-156"/>
</dbReference>
<dbReference type="PDB" id="8BHF">
    <property type="method" value="EM"/>
    <property type="resolution" value="3.10 A"/>
    <property type="chains" value="K1=39-156"/>
</dbReference>
<dbReference type="PDB" id="8BPO">
    <property type="method" value="EM"/>
    <property type="resolution" value="2.80 A"/>
    <property type="chains" value="W2=1-156"/>
</dbReference>
<dbReference type="PDB" id="8BTK">
    <property type="method" value="EM"/>
    <property type="resolution" value="3.50 A"/>
    <property type="chains" value="BX=1-156"/>
</dbReference>
<dbReference type="PDB" id="8P2K">
    <property type="method" value="EM"/>
    <property type="resolution" value="2.90 A"/>
    <property type="chains" value="BX=1-156"/>
</dbReference>
<dbReference type="PDB" id="8RJB">
    <property type="method" value="EM"/>
    <property type="resolution" value="2.69 A"/>
    <property type="chains" value="X=1-156"/>
</dbReference>
<dbReference type="PDB" id="8RJC">
    <property type="method" value="EM"/>
    <property type="resolution" value="2.90 A"/>
    <property type="chains" value="X=1-156"/>
</dbReference>
<dbReference type="PDB" id="8RJD">
    <property type="method" value="EM"/>
    <property type="resolution" value="2.79 A"/>
    <property type="chains" value="X=1-156"/>
</dbReference>
<dbReference type="PDB" id="8SCB">
    <property type="method" value="EM"/>
    <property type="resolution" value="2.50 A"/>
    <property type="chains" value="X=1-156"/>
</dbReference>
<dbReference type="PDB" id="8VFT">
    <property type="method" value="EM"/>
    <property type="resolution" value="3.30 A"/>
    <property type="chains" value="X=1-156"/>
</dbReference>
<dbReference type="PDB" id="9BDL">
    <property type="method" value="EM"/>
    <property type="resolution" value="2.80 A"/>
    <property type="chains" value="AL25=39-156"/>
</dbReference>
<dbReference type="PDB" id="9BDN">
    <property type="method" value="EM"/>
    <property type="resolution" value="3.10 A"/>
    <property type="chains" value="AL25=39-156"/>
</dbReference>
<dbReference type="PDB" id="9BDP">
    <property type="method" value="EM"/>
    <property type="resolution" value="3.70 A"/>
    <property type="chains" value="AL25=39-156"/>
</dbReference>
<dbReference type="PDB" id="9F1B">
    <property type="method" value="EM"/>
    <property type="resolution" value="3.01 A"/>
    <property type="chains" value="BX=1-156"/>
</dbReference>
<dbReference type="PDB" id="9F1C">
    <property type="method" value="EM"/>
    <property type="resolution" value="3.78 A"/>
    <property type="chains" value="BX=1-156"/>
</dbReference>
<dbReference type="PDB" id="9F1D">
    <property type="method" value="EM"/>
    <property type="resolution" value="3.26 A"/>
    <property type="chains" value="BX=1-156"/>
</dbReference>
<dbReference type="PDBsum" id="3JAG"/>
<dbReference type="PDBsum" id="3JAH"/>
<dbReference type="PDBsum" id="3JAI"/>
<dbReference type="PDBsum" id="5LZS"/>
<dbReference type="PDBsum" id="5LZT"/>
<dbReference type="PDBsum" id="5LZU"/>
<dbReference type="PDBsum" id="5LZV"/>
<dbReference type="PDBsum" id="5LZW"/>
<dbReference type="PDBsum" id="5LZX"/>
<dbReference type="PDBsum" id="5LZY"/>
<dbReference type="PDBsum" id="5LZZ"/>
<dbReference type="PDBsum" id="6D90"/>
<dbReference type="PDBsum" id="6D9J"/>
<dbReference type="PDBsum" id="6FTG"/>
<dbReference type="PDBsum" id="6FTI"/>
<dbReference type="PDBsum" id="6FTJ"/>
<dbReference type="PDBsum" id="6HCF"/>
<dbReference type="PDBsum" id="6HCJ"/>
<dbReference type="PDBsum" id="6HCM"/>
<dbReference type="PDBsum" id="6HCQ"/>
<dbReference type="PDBsum" id="6P5I"/>
<dbReference type="PDBsum" id="6P5J"/>
<dbReference type="PDBsum" id="6P5K"/>
<dbReference type="PDBsum" id="6P5N"/>
<dbReference type="PDBsum" id="6R5Q"/>
<dbReference type="PDBsum" id="6R6G"/>
<dbReference type="PDBsum" id="6R6P"/>
<dbReference type="PDBsum" id="6R7Q"/>
<dbReference type="PDBsum" id="6SGC"/>
<dbReference type="PDBsum" id="6T59"/>
<dbReference type="PDBsum" id="6ZVK"/>
<dbReference type="PDBsum" id="7A01"/>
<dbReference type="PDBsum" id="7MDZ"/>
<dbReference type="PDBsum" id="7NFX"/>
<dbReference type="PDBsum" id="7NWG"/>
<dbReference type="PDBsum" id="7NWH"/>
<dbReference type="PDBsum" id="7NWI"/>
<dbReference type="PDBsum" id="7O7Y"/>
<dbReference type="PDBsum" id="7O7Z"/>
<dbReference type="PDBsum" id="7O80"/>
<dbReference type="PDBsum" id="7O81"/>
<dbReference type="PDBsum" id="7OBR"/>
<dbReference type="PDBsum" id="7QWQ"/>
<dbReference type="PDBsum" id="7QWR"/>
<dbReference type="PDBsum" id="7QWS"/>
<dbReference type="PDBsum" id="7TM3"/>
<dbReference type="PDBsum" id="7TUT"/>
<dbReference type="PDBsum" id="7ZJW"/>
<dbReference type="PDBsum" id="7ZJX"/>
<dbReference type="PDBsum" id="8B5L"/>
<dbReference type="PDBsum" id="8B6C"/>
<dbReference type="PDBsum" id="8BHF"/>
<dbReference type="PDBsum" id="8BPO"/>
<dbReference type="PDBsum" id="8BTK"/>
<dbReference type="PDBsum" id="8P2K"/>
<dbReference type="PDBsum" id="8RJB"/>
<dbReference type="PDBsum" id="8RJC"/>
<dbReference type="PDBsum" id="8RJD"/>
<dbReference type="PDBsum" id="8SCB"/>
<dbReference type="PDBsum" id="8VFT"/>
<dbReference type="PDBsum" id="9BDL"/>
<dbReference type="PDBsum" id="9BDN"/>
<dbReference type="PDBsum" id="9BDP"/>
<dbReference type="PDBsum" id="9F1B"/>
<dbReference type="PDBsum" id="9F1C"/>
<dbReference type="PDBsum" id="9F1D"/>
<dbReference type="EMDB" id="EMD-0099"/>
<dbReference type="EMDB" id="EMD-0100"/>
<dbReference type="EMDB" id="EMD-0192"/>
<dbReference type="EMDB" id="EMD-0194"/>
<dbReference type="EMDB" id="EMD-0195"/>
<dbReference type="EMDB" id="EMD-0197"/>
<dbReference type="EMDB" id="EMD-10181"/>
<dbReference type="EMDB" id="EMD-10380"/>
<dbReference type="EMDB" id="EMD-11459"/>
<dbReference type="EMDB" id="EMD-11590"/>
<dbReference type="EMDB" id="EMD-12303"/>
<dbReference type="EMDB" id="EMD-12631"/>
<dbReference type="EMDB" id="EMD-12632"/>
<dbReference type="EMDB" id="EMD-12633"/>
<dbReference type="EMDB" id="EMD-12756"/>
<dbReference type="EMDB" id="EMD-12757"/>
<dbReference type="EMDB" id="EMD-12758"/>
<dbReference type="EMDB" id="EMD-12759"/>
<dbReference type="EMDB" id="EMD-12801"/>
<dbReference type="EMDB" id="EMD-14191"/>
<dbReference type="EMDB" id="EMD-14192"/>
<dbReference type="EMDB" id="EMD-14193"/>
<dbReference type="EMDB" id="EMD-14751"/>
<dbReference type="EMDB" id="EMD-14752"/>
<dbReference type="EMDB" id="EMD-15860"/>
<dbReference type="EMDB" id="EMD-15863"/>
<dbReference type="EMDB" id="EMD-16052"/>
<dbReference type="EMDB" id="EMD-16155"/>
<dbReference type="EMDB" id="EMD-16232"/>
<dbReference type="EMDB" id="EMD-17367"/>
<dbReference type="EMDB" id="EMD-19195"/>
<dbReference type="EMDB" id="EMD-19197"/>
<dbReference type="EMDB" id="EMD-19198"/>
<dbReference type="EMDB" id="EMD-20255"/>
<dbReference type="EMDB" id="EMD-20256"/>
<dbReference type="EMDB" id="EMD-20257"/>
<dbReference type="EMDB" id="EMD-20258"/>
<dbReference type="EMDB" id="EMD-23785"/>
<dbReference type="EMDB" id="EMD-25994"/>
<dbReference type="EMDB" id="EMD-26035"/>
<dbReference type="EMDB" id="EMD-26036"/>
<dbReference type="EMDB" id="EMD-26133"/>
<dbReference type="EMDB" id="EMD-40344"/>
<dbReference type="EMDB" id="EMD-4130"/>
<dbReference type="EMDB" id="EMD-4131"/>
<dbReference type="EMDB" id="EMD-4132"/>
<dbReference type="EMDB" id="EMD-4133"/>
<dbReference type="EMDB" id="EMD-4134"/>
<dbReference type="EMDB" id="EMD-4135"/>
<dbReference type="EMDB" id="EMD-4136"/>
<dbReference type="EMDB" id="EMD-4137"/>
<dbReference type="EMDB" id="EMD-4300"/>
<dbReference type="EMDB" id="EMD-4315"/>
<dbReference type="EMDB" id="EMD-4316"/>
<dbReference type="EMDB" id="EMD-4317"/>
<dbReference type="EMDB" id="EMD-43189"/>
<dbReference type="EMDB" id="EMD-44461"/>
<dbReference type="EMDB" id="EMD-44463"/>
<dbReference type="EMDB" id="EMD-44464"/>
<dbReference type="EMDB" id="EMD-4729"/>
<dbReference type="EMDB" id="EMD-4735"/>
<dbReference type="EMDB" id="EMD-4737"/>
<dbReference type="EMDB" id="EMD-4745"/>
<dbReference type="EMDB" id="EMD-50124"/>
<dbReference type="EMDB" id="EMD-50125"/>
<dbReference type="EMDB" id="EMD-50126"/>
<dbReference type="EMDB" id="EMD-7834"/>
<dbReference type="EMDB" id="EMD-7836"/>
<dbReference type="SMR" id="G1SE76"/>
<dbReference type="FunCoup" id="G1SE76">
    <property type="interactions" value="1271"/>
</dbReference>
<dbReference type="IntAct" id="G1SE76">
    <property type="interactions" value="1"/>
</dbReference>
<dbReference type="STRING" id="9986.ENSOCUP00000000740"/>
<dbReference type="PaxDb" id="9986-ENSOCUP00000000740"/>
<dbReference type="Ensembl" id="ENSOCUT00000000851.3">
    <property type="protein sequence ID" value="ENSOCUP00000000740.2"/>
    <property type="gene ID" value="ENSOCUG00000000851.3"/>
</dbReference>
<dbReference type="Ensembl" id="ENSOCUT00000013394.1">
    <property type="protein sequence ID" value="ENSOCUP00000011525.1"/>
    <property type="gene ID" value="ENSOCUG00000013397.1"/>
</dbReference>
<dbReference type="Ensembl" id="ENSOCUT00000022798.2">
    <property type="protein sequence ID" value="ENSOCUP00000021544.1"/>
    <property type="gene ID" value="ENSOCUG00000039533.1"/>
</dbReference>
<dbReference type="Ensembl" id="ENSOCUT00000028580.2">
    <property type="protein sequence ID" value="ENSOCUP00000019690.1"/>
    <property type="gene ID" value="ENSOCUG00000027648.2"/>
</dbReference>
<dbReference type="Ensembl" id="ENSOCUT00000031331.1">
    <property type="protein sequence ID" value="ENSOCUP00000024919.1"/>
    <property type="gene ID" value="ENSOCUG00000027980.1"/>
</dbReference>
<dbReference type="GeneID" id="100568446"/>
<dbReference type="KEGG" id="ocu:100358852"/>
<dbReference type="KEGG" id="ocu:100568446"/>
<dbReference type="KEGG" id="ocu:108176709"/>
<dbReference type="KEGG" id="ocu:108177184"/>
<dbReference type="KEGG" id="ocu:108177974"/>
<dbReference type="CTD" id="6147"/>
<dbReference type="eggNOG" id="KOG1751">
    <property type="taxonomic scope" value="Eukaryota"/>
</dbReference>
<dbReference type="GeneTree" id="ENSGT00950000182901"/>
<dbReference type="HOGENOM" id="CLU_037562_0_2_1"/>
<dbReference type="OMA" id="RLDHHKV"/>
<dbReference type="OrthoDB" id="9620765at2759"/>
<dbReference type="TreeFam" id="TF314116"/>
<dbReference type="Proteomes" id="UP000001811">
    <property type="component" value="Chromosome 19"/>
</dbReference>
<dbReference type="Proteomes" id="UP000001811">
    <property type="component" value="Chromosome 2"/>
</dbReference>
<dbReference type="Proteomes" id="UP000001811">
    <property type="component" value="Chromosome 4"/>
</dbReference>
<dbReference type="Proteomes" id="UP000001811">
    <property type="component" value="Chromosome 9"/>
</dbReference>
<dbReference type="Bgee" id="ENSOCUG00000000851">
    <property type="expression patterns" value="Expressed in autopod skin and 14 other cell types or tissues"/>
</dbReference>
<dbReference type="GO" id="GO:0022626">
    <property type="term" value="C:cytosolic ribosome"/>
    <property type="evidence" value="ECO:0007669"/>
    <property type="project" value="UniProtKB-ARBA"/>
</dbReference>
<dbReference type="GO" id="GO:0005634">
    <property type="term" value="C:nucleus"/>
    <property type="evidence" value="ECO:0007669"/>
    <property type="project" value="UniProtKB-SubCell"/>
</dbReference>
<dbReference type="GO" id="GO:0044391">
    <property type="term" value="C:ribosomal subunit"/>
    <property type="evidence" value="ECO:0007669"/>
    <property type="project" value="UniProtKB-ARBA"/>
</dbReference>
<dbReference type="GO" id="GO:0019843">
    <property type="term" value="F:rRNA binding"/>
    <property type="evidence" value="ECO:0007669"/>
    <property type="project" value="UniProtKB-KW"/>
</dbReference>
<dbReference type="GO" id="GO:0003735">
    <property type="term" value="F:structural constituent of ribosome"/>
    <property type="evidence" value="ECO:0007669"/>
    <property type="project" value="InterPro"/>
</dbReference>
<dbReference type="GO" id="GO:0006412">
    <property type="term" value="P:translation"/>
    <property type="evidence" value="ECO:0007669"/>
    <property type="project" value="InterPro"/>
</dbReference>
<dbReference type="FunFam" id="3.30.70.330:FF:001015">
    <property type="entry name" value="Uncharacterized protein"/>
    <property type="match status" value="1"/>
</dbReference>
<dbReference type="Gene3D" id="3.30.70.330">
    <property type="match status" value="1"/>
</dbReference>
<dbReference type="HAMAP" id="MF_01369_A">
    <property type="entry name" value="Ribosomal_uL23_A"/>
    <property type="match status" value="1"/>
</dbReference>
<dbReference type="InterPro" id="IPR012677">
    <property type="entry name" value="Nucleotide-bd_a/b_plait_sf"/>
</dbReference>
<dbReference type="InterPro" id="IPR019985">
    <property type="entry name" value="Ribosomal_uL23"/>
</dbReference>
<dbReference type="InterPro" id="IPR013025">
    <property type="entry name" value="Ribosomal_uL23-like"/>
</dbReference>
<dbReference type="InterPro" id="IPR012678">
    <property type="entry name" value="Ribosomal_uL23/eL15/eS24_sf"/>
</dbReference>
<dbReference type="InterPro" id="IPR001014">
    <property type="entry name" value="Ribosomal_uL23_CS"/>
</dbReference>
<dbReference type="InterPro" id="IPR005633">
    <property type="entry name" value="Ribosomal_uL23_N"/>
</dbReference>
<dbReference type="NCBIfam" id="NF011118">
    <property type="entry name" value="PRK14548.1"/>
    <property type="match status" value="1"/>
</dbReference>
<dbReference type="NCBIfam" id="TIGR03636">
    <property type="entry name" value="uL23_arch"/>
    <property type="match status" value="1"/>
</dbReference>
<dbReference type="PANTHER" id="PTHR11620">
    <property type="entry name" value="60S RIBOSOMAL PROTEIN L23A"/>
    <property type="match status" value="1"/>
</dbReference>
<dbReference type="Pfam" id="PF00276">
    <property type="entry name" value="Ribosomal_L23"/>
    <property type="match status" value="1"/>
</dbReference>
<dbReference type="Pfam" id="PF03939">
    <property type="entry name" value="Ribosomal_L23eN"/>
    <property type="match status" value="1"/>
</dbReference>
<dbReference type="SUPFAM" id="SSF54189">
    <property type="entry name" value="Ribosomal proteins S24e, L23 and L15e"/>
    <property type="match status" value="1"/>
</dbReference>
<dbReference type="PROSITE" id="PS00050">
    <property type="entry name" value="RIBOSOMAL_L23"/>
    <property type="match status" value="1"/>
</dbReference>
<proteinExistence type="evidence at protein level"/>